<accession>B7MJ94</accession>
<keyword id="KW-0131">Cell cycle</keyword>
<keyword id="KW-0132">Cell division</keyword>
<keyword id="KW-0133">Cell shape</keyword>
<keyword id="KW-0961">Cell wall biogenesis/degradation</keyword>
<keyword id="KW-0963">Cytoplasm</keyword>
<keyword id="KW-0326">Glycosidase</keyword>
<keyword id="KW-0378">Hydrolase</keyword>
<keyword id="KW-0573">Peptidoglycan synthesis</keyword>
<keyword id="KW-1185">Reference proteome</keyword>
<dbReference type="EC" id="3.2.1.52" evidence="1"/>
<dbReference type="EMBL" id="CU928161">
    <property type="protein sequence ID" value="CAR02447.1"/>
    <property type="molecule type" value="Genomic_DNA"/>
</dbReference>
<dbReference type="RefSeq" id="WP_000529300.1">
    <property type="nucleotide sequence ID" value="NC_011742.1"/>
</dbReference>
<dbReference type="SMR" id="B7MJ94"/>
<dbReference type="CAZy" id="GH3">
    <property type="family name" value="Glycoside Hydrolase Family 3"/>
</dbReference>
<dbReference type="KEGG" id="ecz:ECS88_1121"/>
<dbReference type="HOGENOM" id="CLU_008392_0_0_6"/>
<dbReference type="UniPathway" id="UPA00544"/>
<dbReference type="Proteomes" id="UP000000747">
    <property type="component" value="Chromosome"/>
</dbReference>
<dbReference type="GO" id="GO:0005737">
    <property type="term" value="C:cytoplasm"/>
    <property type="evidence" value="ECO:0007669"/>
    <property type="project" value="UniProtKB-SubCell"/>
</dbReference>
<dbReference type="GO" id="GO:0004563">
    <property type="term" value="F:beta-N-acetylhexosaminidase activity"/>
    <property type="evidence" value="ECO:0007669"/>
    <property type="project" value="UniProtKB-UniRule"/>
</dbReference>
<dbReference type="GO" id="GO:0005975">
    <property type="term" value="P:carbohydrate metabolic process"/>
    <property type="evidence" value="ECO:0007669"/>
    <property type="project" value="InterPro"/>
</dbReference>
<dbReference type="GO" id="GO:0051301">
    <property type="term" value="P:cell division"/>
    <property type="evidence" value="ECO:0007669"/>
    <property type="project" value="UniProtKB-KW"/>
</dbReference>
<dbReference type="GO" id="GO:0071555">
    <property type="term" value="P:cell wall organization"/>
    <property type="evidence" value="ECO:0007669"/>
    <property type="project" value="UniProtKB-KW"/>
</dbReference>
<dbReference type="GO" id="GO:0009252">
    <property type="term" value="P:peptidoglycan biosynthetic process"/>
    <property type="evidence" value="ECO:0007669"/>
    <property type="project" value="UniProtKB-KW"/>
</dbReference>
<dbReference type="GO" id="GO:0009254">
    <property type="term" value="P:peptidoglycan turnover"/>
    <property type="evidence" value="ECO:0007669"/>
    <property type="project" value="UniProtKB-UniRule"/>
</dbReference>
<dbReference type="GO" id="GO:0008360">
    <property type="term" value="P:regulation of cell shape"/>
    <property type="evidence" value="ECO:0007669"/>
    <property type="project" value="UniProtKB-KW"/>
</dbReference>
<dbReference type="FunFam" id="3.20.20.300:FF:000001">
    <property type="entry name" value="Beta-hexosaminidase"/>
    <property type="match status" value="1"/>
</dbReference>
<dbReference type="Gene3D" id="3.20.20.300">
    <property type="entry name" value="Glycoside hydrolase, family 3, N-terminal domain"/>
    <property type="match status" value="1"/>
</dbReference>
<dbReference type="HAMAP" id="MF_00364">
    <property type="entry name" value="NagZ"/>
    <property type="match status" value="1"/>
</dbReference>
<dbReference type="InterPro" id="IPR022956">
    <property type="entry name" value="Beta_hexosaminidase_bac"/>
</dbReference>
<dbReference type="InterPro" id="IPR019800">
    <property type="entry name" value="Glyco_hydro_3_AS"/>
</dbReference>
<dbReference type="InterPro" id="IPR001764">
    <property type="entry name" value="Glyco_hydro_3_N"/>
</dbReference>
<dbReference type="InterPro" id="IPR036962">
    <property type="entry name" value="Glyco_hydro_3_N_sf"/>
</dbReference>
<dbReference type="InterPro" id="IPR017853">
    <property type="entry name" value="Glycoside_hydrolase_SF"/>
</dbReference>
<dbReference type="InterPro" id="IPR050226">
    <property type="entry name" value="NagZ_Beta-hexosaminidase"/>
</dbReference>
<dbReference type="NCBIfam" id="NF003740">
    <property type="entry name" value="PRK05337.1"/>
    <property type="match status" value="1"/>
</dbReference>
<dbReference type="PANTHER" id="PTHR30480:SF13">
    <property type="entry name" value="BETA-HEXOSAMINIDASE"/>
    <property type="match status" value="1"/>
</dbReference>
<dbReference type="PANTHER" id="PTHR30480">
    <property type="entry name" value="BETA-HEXOSAMINIDASE-RELATED"/>
    <property type="match status" value="1"/>
</dbReference>
<dbReference type="Pfam" id="PF00933">
    <property type="entry name" value="Glyco_hydro_3"/>
    <property type="match status" value="1"/>
</dbReference>
<dbReference type="SUPFAM" id="SSF51445">
    <property type="entry name" value="(Trans)glycosidases"/>
    <property type="match status" value="1"/>
</dbReference>
<dbReference type="PROSITE" id="PS00775">
    <property type="entry name" value="GLYCOSYL_HYDROL_F3"/>
    <property type="match status" value="1"/>
</dbReference>
<organism>
    <name type="scientific">Escherichia coli O45:K1 (strain S88 / ExPEC)</name>
    <dbReference type="NCBI Taxonomy" id="585035"/>
    <lineage>
        <taxon>Bacteria</taxon>
        <taxon>Pseudomonadati</taxon>
        <taxon>Pseudomonadota</taxon>
        <taxon>Gammaproteobacteria</taxon>
        <taxon>Enterobacterales</taxon>
        <taxon>Enterobacteriaceae</taxon>
        <taxon>Escherichia</taxon>
    </lineage>
</organism>
<evidence type="ECO:0000255" key="1">
    <source>
        <dbReference type="HAMAP-Rule" id="MF_00364"/>
    </source>
</evidence>
<feature type="chain" id="PRO_1000121053" description="Beta-hexosaminidase">
    <location>
        <begin position="1"/>
        <end position="341"/>
    </location>
</feature>
<feature type="active site" description="Proton donor/acceptor" evidence="1">
    <location>
        <position position="176"/>
    </location>
</feature>
<feature type="active site" description="Nucleophile" evidence="1">
    <location>
        <position position="248"/>
    </location>
</feature>
<feature type="binding site" evidence="1">
    <location>
        <position position="62"/>
    </location>
    <ligand>
        <name>substrate</name>
    </ligand>
</feature>
<feature type="binding site" evidence="1">
    <location>
        <position position="70"/>
    </location>
    <ligand>
        <name>substrate</name>
    </ligand>
</feature>
<feature type="binding site" evidence="1">
    <location>
        <position position="133"/>
    </location>
    <ligand>
        <name>substrate</name>
    </ligand>
</feature>
<feature type="binding site" evidence="1">
    <location>
        <begin position="163"/>
        <end position="164"/>
    </location>
    <ligand>
        <name>substrate</name>
    </ligand>
</feature>
<feature type="site" description="Important for catalytic activity" evidence="1">
    <location>
        <position position="174"/>
    </location>
</feature>
<sequence>MGPVMLDVEGYELDAEEREILAHPLVGGLILFTRNYHDPAQLRELVRQIRAASRNHLVVAVDQEGGRVQRFREGFTRLPAAQSFAALLGMEEGGKLAQEAGWLMASEMIAMDIDISFAPVLDVGHISAAIGERSYHADPQKALAIASRFIDGMHEAGMKTTGKHFPGHGAVTADSHKETPCDPRPQAEIRAKDMSVFSSLIRENKLDAIMPAHVIYSDVDPRPASGSPYWLKTVLRQELGFDGVIFSDDLSMEGAAIMGSYAERGQASLDAGCDMILVCNNRKGAVSVLDNLSPIKAERVTRLYHKGSFSRQELMDSARWKAISTRLNQLHERWQEEKAGH</sequence>
<reference key="1">
    <citation type="journal article" date="2009" name="PLoS Genet.">
        <title>Organised genome dynamics in the Escherichia coli species results in highly diverse adaptive paths.</title>
        <authorList>
            <person name="Touchon M."/>
            <person name="Hoede C."/>
            <person name="Tenaillon O."/>
            <person name="Barbe V."/>
            <person name="Baeriswyl S."/>
            <person name="Bidet P."/>
            <person name="Bingen E."/>
            <person name="Bonacorsi S."/>
            <person name="Bouchier C."/>
            <person name="Bouvet O."/>
            <person name="Calteau A."/>
            <person name="Chiapello H."/>
            <person name="Clermont O."/>
            <person name="Cruveiller S."/>
            <person name="Danchin A."/>
            <person name="Diard M."/>
            <person name="Dossat C."/>
            <person name="Karoui M.E."/>
            <person name="Frapy E."/>
            <person name="Garry L."/>
            <person name="Ghigo J.M."/>
            <person name="Gilles A.M."/>
            <person name="Johnson J."/>
            <person name="Le Bouguenec C."/>
            <person name="Lescat M."/>
            <person name="Mangenot S."/>
            <person name="Martinez-Jehanne V."/>
            <person name="Matic I."/>
            <person name="Nassif X."/>
            <person name="Oztas S."/>
            <person name="Petit M.A."/>
            <person name="Pichon C."/>
            <person name="Rouy Z."/>
            <person name="Ruf C.S."/>
            <person name="Schneider D."/>
            <person name="Tourret J."/>
            <person name="Vacherie B."/>
            <person name="Vallenet D."/>
            <person name="Medigue C."/>
            <person name="Rocha E.P.C."/>
            <person name="Denamur E."/>
        </authorList>
    </citation>
    <scope>NUCLEOTIDE SEQUENCE [LARGE SCALE GENOMIC DNA]</scope>
    <source>
        <strain>S88 / ExPEC</strain>
    </source>
</reference>
<protein>
    <recommendedName>
        <fullName evidence="1">Beta-hexosaminidase</fullName>
        <ecNumber evidence="1">3.2.1.52</ecNumber>
    </recommendedName>
    <alternativeName>
        <fullName evidence="1">Beta-N-acetylhexosaminidase</fullName>
    </alternativeName>
    <alternativeName>
        <fullName evidence="1">N-acetyl-beta-glucosaminidase</fullName>
    </alternativeName>
</protein>
<name>NAGZ_ECO45</name>
<comment type="function">
    <text evidence="1">Plays a role in peptidoglycan recycling by cleaving the terminal beta-1,4-linked N-acetylglucosamine (GlcNAc) from peptide-linked peptidoglycan fragments, giving rise to free GlcNAc, anhydro-N-acetylmuramic acid and anhydro-N-acetylmuramic acid-linked peptides.</text>
</comment>
<comment type="catalytic activity">
    <reaction evidence="1">
        <text>Hydrolysis of terminal non-reducing N-acetyl-D-hexosamine residues in N-acetyl-beta-D-hexosaminides.</text>
        <dbReference type="EC" id="3.2.1.52"/>
    </reaction>
</comment>
<comment type="pathway">
    <text evidence="1">Cell wall biogenesis; peptidoglycan recycling.</text>
</comment>
<comment type="subcellular location">
    <subcellularLocation>
        <location evidence="1">Cytoplasm</location>
    </subcellularLocation>
</comment>
<comment type="similarity">
    <text evidence="1">Belongs to the glycosyl hydrolase 3 family. NagZ subfamily.</text>
</comment>
<gene>
    <name evidence="1" type="primary">nagZ</name>
    <name type="ordered locus">ECS88_1121</name>
</gene>
<proteinExistence type="inferred from homology"/>